<reference key="1">
    <citation type="submission" date="2008-02" db="EMBL/GenBank/DDBJ databases">
        <title>Complete sequence of chromosome 1 of Burkholderia cenocepacia MC0-3.</title>
        <authorList>
            <person name="Copeland A."/>
            <person name="Lucas S."/>
            <person name="Lapidus A."/>
            <person name="Barry K."/>
            <person name="Bruce D."/>
            <person name="Goodwin L."/>
            <person name="Glavina del Rio T."/>
            <person name="Dalin E."/>
            <person name="Tice H."/>
            <person name="Pitluck S."/>
            <person name="Chain P."/>
            <person name="Malfatti S."/>
            <person name="Shin M."/>
            <person name="Vergez L."/>
            <person name="Schmutz J."/>
            <person name="Larimer F."/>
            <person name="Land M."/>
            <person name="Hauser L."/>
            <person name="Kyrpides N."/>
            <person name="Mikhailova N."/>
            <person name="Tiedje J."/>
            <person name="Richardson P."/>
        </authorList>
    </citation>
    <scope>NUCLEOTIDE SEQUENCE [LARGE SCALE GENOMIC DNA]</scope>
    <source>
        <strain>MC0-3</strain>
    </source>
</reference>
<accession>B1JUE4</accession>
<evidence type="ECO:0000255" key="1">
    <source>
        <dbReference type="HAMAP-Rule" id="MF_00183"/>
    </source>
</evidence>
<comment type="function">
    <text evidence="1">Catalyzes the NADPH-dependent rearrangement and reduction of 1-deoxy-D-xylulose-5-phosphate (DXP) to 2-C-methyl-D-erythritol 4-phosphate (MEP).</text>
</comment>
<comment type="catalytic activity">
    <reaction evidence="1">
        <text>2-C-methyl-D-erythritol 4-phosphate + NADP(+) = 1-deoxy-D-xylulose 5-phosphate + NADPH + H(+)</text>
        <dbReference type="Rhea" id="RHEA:13717"/>
        <dbReference type="ChEBI" id="CHEBI:15378"/>
        <dbReference type="ChEBI" id="CHEBI:57783"/>
        <dbReference type="ChEBI" id="CHEBI:57792"/>
        <dbReference type="ChEBI" id="CHEBI:58262"/>
        <dbReference type="ChEBI" id="CHEBI:58349"/>
        <dbReference type="EC" id="1.1.1.267"/>
    </reaction>
    <physiologicalReaction direction="right-to-left" evidence="1">
        <dbReference type="Rhea" id="RHEA:13719"/>
    </physiologicalReaction>
</comment>
<comment type="cofactor">
    <cofactor evidence="1">
        <name>Mg(2+)</name>
        <dbReference type="ChEBI" id="CHEBI:18420"/>
    </cofactor>
    <cofactor evidence="1">
        <name>Mn(2+)</name>
        <dbReference type="ChEBI" id="CHEBI:29035"/>
    </cofactor>
</comment>
<comment type="pathway">
    <text evidence="1">Isoprenoid biosynthesis; isopentenyl diphosphate biosynthesis via DXP pathway; isopentenyl diphosphate from 1-deoxy-D-xylulose 5-phosphate: step 1/6.</text>
</comment>
<comment type="similarity">
    <text evidence="1">Belongs to the DXR family.</text>
</comment>
<organism>
    <name type="scientific">Burkholderia orbicola (strain MC0-3)</name>
    <dbReference type="NCBI Taxonomy" id="406425"/>
    <lineage>
        <taxon>Bacteria</taxon>
        <taxon>Pseudomonadati</taxon>
        <taxon>Pseudomonadota</taxon>
        <taxon>Betaproteobacteria</taxon>
        <taxon>Burkholderiales</taxon>
        <taxon>Burkholderiaceae</taxon>
        <taxon>Burkholderia</taxon>
        <taxon>Burkholderia cepacia complex</taxon>
        <taxon>Burkholderia orbicola</taxon>
    </lineage>
</organism>
<proteinExistence type="inferred from homology"/>
<sequence>MQKRLTLLGSTGSIGDSTLDVVARHPERFSVYALTAHRNGDKLVEQCLRFAPEVAVVGDAATAAHVDAKLRAAGSKTVVLHGPQALVDVSKSDGCDTVVAAIVGAAGLAPSLAAARAGKRILLANKEALVMSGAIFMDAVRDHGAILLPVDSEHNAIFQCMPRDAAEHGGISKIILTASGGPFRTREPATLVDVTPDEACKHPNWVMGRKISVDSATMMNKGLEVIEAHWIFGLPGDRIDVLIHPQSVIHSLVSYRDGSVLAQLGNPDMRTPIAHALAFPERVDAGVDQLDLAQIAQLSFEKPDYARFPCLALALKALEEGGIASAALNAANEVAVEAFLERRIGFMAIAATVDAVLNTLPNRAPDGLDDVLAADAEARRLAAAIIAKAPAPRVERTV</sequence>
<name>DXR_BURO0</name>
<feature type="chain" id="PRO_1000098476" description="1-deoxy-D-xylulose 5-phosphate reductoisomerase">
    <location>
        <begin position="1"/>
        <end position="398"/>
    </location>
</feature>
<feature type="binding site" evidence="1">
    <location>
        <position position="11"/>
    </location>
    <ligand>
        <name>NADPH</name>
        <dbReference type="ChEBI" id="CHEBI:57783"/>
    </ligand>
</feature>
<feature type="binding site" evidence="1">
    <location>
        <position position="12"/>
    </location>
    <ligand>
        <name>NADPH</name>
        <dbReference type="ChEBI" id="CHEBI:57783"/>
    </ligand>
</feature>
<feature type="binding site" evidence="1">
    <location>
        <position position="13"/>
    </location>
    <ligand>
        <name>NADPH</name>
        <dbReference type="ChEBI" id="CHEBI:57783"/>
    </ligand>
</feature>
<feature type="binding site" evidence="1">
    <location>
        <position position="14"/>
    </location>
    <ligand>
        <name>NADPH</name>
        <dbReference type="ChEBI" id="CHEBI:57783"/>
    </ligand>
</feature>
<feature type="binding site" evidence="1">
    <location>
        <position position="38"/>
    </location>
    <ligand>
        <name>NADPH</name>
        <dbReference type="ChEBI" id="CHEBI:57783"/>
    </ligand>
</feature>
<feature type="binding site" evidence="1">
    <location>
        <position position="39"/>
    </location>
    <ligand>
        <name>NADPH</name>
        <dbReference type="ChEBI" id="CHEBI:57783"/>
    </ligand>
</feature>
<feature type="binding site" evidence="1">
    <location>
        <position position="125"/>
    </location>
    <ligand>
        <name>NADPH</name>
        <dbReference type="ChEBI" id="CHEBI:57783"/>
    </ligand>
</feature>
<feature type="binding site" evidence="1">
    <location>
        <position position="126"/>
    </location>
    <ligand>
        <name>1-deoxy-D-xylulose 5-phosphate</name>
        <dbReference type="ChEBI" id="CHEBI:57792"/>
    </ligand>
</feature>
<feature type="binding site" evidence="1">
    <location>
        <position position="127"/>
    </location>
    <ligand>
        <name>NADPH</name>
        <dbReference type="ChEBI" id="CHEBI:57783"/>
    </ligand>
</feature>
<feature type="binding site" evidence="1">
    <location>
        <position position="151"/>
    </location>
    <ligand>
        <name>Mn(2+)</name>
        <dbReference type="ChEBI" id="CHEBI:29035"/>
    </ligand>
</feature>
<feature type="binding site" evidence="1">
    <location>
        <position position="152"/>
    </location>
    <ligand>
        <name>1-deoxy-D-xylulose 5-phosphate</name>
        <dbReference type="ChEBI" id="CHEBI:57792"/>
    </ligand>
</feature>
<feature type="binding site" evidence="1">
    <location>
        <position position="153"/>
    </location>
    <ligand>
        <name>1-deoxy-D-xylulose 5-phosphate</name>
        <dbReference type="ChEBI" id="CHEBI:57792"/>
    </ligand>
</feature>
<feature type="binding site" evidence="1">
    <location>
        <position position="153"/>
    </location>
    <ligand>
        <name>Mn(2+)</name>
        <dbReference type="ChEBI" id="CHEBI:29035"/>
    </ligand>
</feature>
<feature type="binding site" evidence="1">
    <location>
        <position position="179"/>
    </location>
    <ligand>
        <name>1-deoxy-D-xylulose 5-phosphate</name>
        <dbReference type="ChEBI" id="CHEBI:57792"/>
    </ligand>
</feature>
<feature type="binding site" evidence="1">
    <location>
        <position position="202"/>
    </location>
    <ligand>
        <name>1-deoxy-D-xylulose 5-phosphate</name>
        <dbReference type="ChEBI" id="CHEBI:57792"/>
    </ligand>
</feature>
<feature type="binding site" evidence="1">
    <location>
        <position position="208"/>
    </location>
    <ligand>
        <name>NADPH</name>
        <dbReference type="ChEBI" id="CHEBI:57783"/>
    </ligand>
</feature>
<feature type="binding site" evidence="1">
    <location>
        <position position="215"/>
    </location>
    <ligand>
        <name>1-deoxy-D-xylulose 5-phosphate</name>
        <dbReference type="ChEBI" id="CHEBI:57792"/>
    </ligand>
</feature>
<feature type="binding site" evidence="1">
    <location>
        <position position="220"/>
    </location>
    <ligand>
        <name>1-deoxy-D-xylulose 5-phosphate</name>
        <dbReference type="ChEBI" id="CHEBI:57792"/>
    </ligand>
</feature>
<feature type="binding site" evidence="1">
    <location>
        <position position="221"/>
    </location>
    <ligand>
        <name>1-deoxy-D-xylulose 5-phosphate</name>
        <dbReference type="ChEBI" id="CHEBI:57792"/>
    </ligand>
</feature>
<feature type="binding site" evidence="1">
    <location>
        <position position="224"/>
    </location>
    <ligand>
        <name>1-deoxy-D-xylulose 5-phosphate</name>
        <dbReference type="ChEBI" id="CHEBI:57792"/>
    </ligand>
</feature>
<feature type="binding site" evidence="1">
    <location>
        <position position="224"/>
    </location>
    <ligand>
        <name>Mn(2+)</name>
        <dbReference type="ChEBI" id="CHEBI:29035"/>
    </ligand>
</feature>
<gene>
    <name evidence="1" type="primary">dxr</name>
    <name type="ordered locus">Bcenmc03_2033</name>
</gene>
<dbReference type="EC" id="1.1.1.267" evidence="1"/>
<dbReference type="EMBL" id="CP000958">
    <property type="protein sequence ID" value="ACA91194.1"/>
    <property type="molecule type" value="Genomic_DNA"/>
</dbReference>
<dbReference type="RefSeq" id="WP_006483824.1">
    <property type="nucleotide sequence ID" value="NC_010508.1"/>
</dbReference>
<dbReference type="SMR" id="B1JUE4"/>
<dbReference type="GeneID" id="83048810"/>
<dbReference type="KEGG" id="bcm:Bcenmc03_2033"/>
<dbReference type="HOGENOM" id="CLU_035714_4_0_4"/>
<dbReference type="UniPathway" id="UPA00056">
    <property type="reaction ID" value="UER00092"/>
</dbReference>
<dbReference type="Proteomes" id="UP000002169">
    <property type="component" value="Chromosome 1"/>
</dbReference>
<dbReference type="GO" id="GO:0030604">
    <property type="term" value="F:1-deoxy-D-xylulose-5-phosphate reductoisomerase activity"/>
    <property type="evidence" value="ECO:0007669"/>
    <property type="project" value="UniProtKB-UniRule"/>
</dbReference>
<dbReference type="GO" id="GO:0030145">
    <property type="term" value="F:manganese ion binding"/>
    <property type="evidence" value="ECO:0007669"/>
    <property type="project" value="TreeGrafter"/>
</dbReference>
<dbReference type="GO" id="GO:0070402">
    <property type="term" value="F:NADPH binding"/>
    <property type="evidence" value="ECO:0007669"/>
    <property type="project" value="InterPro"/>
</dbReference>
<dbReference type="GO" id="GO:0051484">
    <property type="term" value="P:isopentenyl diphosphate biosynthetic process, methylerythritol 4-phosphate pathway involved in terpenoid biosynthetic process"/>
    <property type="evidence" value="ECO:0007669"/>
    <property type="project" value="TreeGrafter"/>
</dbReference>
<dbReference type="FunFam" id="3.40.50.720:FF:000045">
    <property type="entry name" value="1-deoxy-D-xylulose 5-phosphate reductoisomerase"/>
    <property type="match status" value="1"/>
</dbReference>
<dbReference type="Gene3D" id="1.10.1740.10">
    <property type="match status" value="1"/>
</dbReference>
<dbReference type="Gene3D" id="3.40.50.720">
    <property type="entry name" value="NAD(P)-binding Rossmann-like Domain"/>
    <property type="match status" value="1"/>
</dbReference>
<dbReference type="HAMAP" id="MF_00183">
    <property type="entry name" value="DXP_reductoisom"/>
    <property type="match status" value="1"/>
</dbReference>
<dbReference type="InterPro" id="IPR003821">
    <property type="entry name" value="DXP_reductoisomerase"/>
</dbReference>
<dbReference type="InterPro" id="IPR013644">
    <property type="entry name" value="DXP_reductoisomerase_C"/>
</dbReference>
<dbReference type="InterPro" id="IPR013512">
    <property type="entry name" value="DXP_reductoisomerase_N"/>
</dbReference>
<dbReference type="InterPro" id="IPR026877">
    <property type="entry name" value="DXPR_C"/>
</dbReference>
<dbReference type="InterPro" id="IPR036169">
    <property type="entry name" value="DXPR_C_sf"/>
</dbReference>
<dbReference type="InterPro" id="IPR036291">
    <property type="entry name" value="NAD(P)-bd_dom_sf"/>
</dbReference>
<dbReference type="NCBIfam" id="TIGR00243">
    <property type="entry name" value="Dxr"/>
    <property type="match status" value="1"/>
</dbReference>
<dbReference type="NCBIfam" id="NF003938">
    <property type="entry name" value="PRK05447.1-1"/>
    <property type="match status" value="1"/>
</dbReference>
<dbReference type="NCBIfam" id="NF009114">
    <property type="entry name" value="PRK12464.1"/>
    <property type="match status" value="1"/>
</dbReference>
<dbReference type="PANTHER" id="PTHR30525">
    <property type="entry name" value="1-DEOXY-D-XYLULOSE 5-PHOSPHATE REDUCTOISOMERASE"/>
    <property type="match status" value="1"/>
</dbReference>
<dbReference type="PANTHER" id="PTHR30525:SF0">
    <property type="entry name" value="1-DEOXY-D-XYLULOSE 5-PHOSPHATE REDUCTOISOMERASE, CHLOROPLASTIC"/>
    <property type="match status" value="1"/>
</dbReference>
<dbReference type="Pfam" id="PF08436">
    <property type="entry name" value="DXP_redisom_C"/>
    <property type="match status" value="1"/>
</dbReference>
<dbReference type="Pfam" id="PF02670">
    <property type="entry name" value="DXP_reductoisom"/>
    <property type="match status" value="1"/>
</dbReference>
<dbReference type="Pfam" id="PF13288">
    <property type="entry name" value="DXPR_C"/>
    <property type="match status" value="1"/>
</dbReference>
<dbReference type="PIRSF" id="PIRSF006205">
    <property type="entry name" value="Dxp_reductismrs"/>
    <property type="match status" value="1"/>
</dbReference>
<dbReference type="SUPFAM" id="SSF69055">
    <property type="entry name" value="1-deoxy-D-xylulose-5-phosphate reductoisomerase, C-terminal domain"/>
    <property type="match status" value="1"/>
</dbReference>
<dbReference type="SUPFAM" id="SSF55347">
    <property type="entry name" value="Glyceraldehyde-3-phosphate dehydrogenase-like, C-terminal domain"/>
    <property type="match status" value="1"/>
</dbReference>
<dbReference type="SUPFAM" id="SSF51735">
    <property type="entry name" value="NAD(P)-binding Rossmann-fold domains"/>
    <property type="match status" value="1"/>
</dbReference>
<protein>
    <recommendedName>
        <fullName evidence="1">1-deoxy-D-xylulose 5-phosphate reductoisomerase</fullName>
        <shortName evidence="1">DXP reductoisomerase</shortName>
        <ecNumber evidence="1">1.1.1.267</ecNumber>
    </recommendedName>
    <alternativeName>
        <fullName evidence="1">1-deoxyxylulose-5-phosphate reductoisomerase</fullName>
    </alternativeName>
    <alternativeName>
        <fullName evidence="1">2-C-methyl-D-erythritol 4-phosphate synthase</fullName>
    </alternativeName>
</protein>
<keyword id="KW-0414">Isoprene biosynthesis</keyword>
<keyword id="KW-0464">Manganese</keyword>
<keyword id="KW-0479">Metal-binding</keyword>
<keyword id="KW-0521">NADP</keyword>
<keyword id="KW-0560">Oxidoreductase</keyword>